<accession>Q6AXX9</accession>
<proteinExistence type="evidence at transcript level"/>
<name>ABEC4_RAT</name>
<gene>
    <name type="primary">Apobec4</name>
</gene>
<comment type="function">
    <text evidence="1">Putative C to U editing enzyme whose physiological substrate is not yet known.</text>
</comment>
<comment type="cofactor">
    <cofactor evidence="1">
        <name>Zn(2+)</name>
        <dbReference type="ChEBI" id="CHEBI:29105"/>
    </cofactor>
</comment>
<comment type="similarity">
    <text evidence="4">Belongs to the cytidine and deoxycytidylate deaminase family.</text>
</comment>
<keyword id="KW-0378">Hydrolase</keyword>
<keyword id="KW-0479">Metal-binding</keyword>
<keyword id="KW-0507">mRNA processing</keyword>
<keyword id="KW-1185">Reference proteome</keyword>
<keyword id="KW-0862">Zinc</keyword>
<sequence>MEPLYEEYLTHSGTIVKPYYWLSVSLNCTNCPYHIRTGEEARVPYTEFHQTFGFPWSTYPQTKHLTFYELRSSSGNLIQKGLASNCTGSHTHPESMLFERDGYLDSLIFHDSNIRHIILYSNNSPCDEANHCCISKMYNFLMNYPEVTLSVFFSQLYHTENQFPTSAWNREALRGLASLWPQVTLSAISGGIWQSILETFVSGISEGLTAVRPFTAGRTLTDRYNAYEINCITEVKPYFTDALHSWQKENQDQKVWAASENQPLHNTTPAQWQPDMSQDCRTPAVFMLVPYRDLPPIHVNPSPQKPRTVVRHLNTLQLSASKVKALRKSPSGRPVKKEEARKGSTRSQEANETNKSKWKKQTLFIKSNICHLLEREQKKIGILSSWSV</sequence>
<dbReference type="EC" id="3.5.4.-"/>
<dbReference type="EMBL" id="BC079272">
    <property type="protein sequence ID" value="AAH79272.1"/>
    <property type="molecule type" value="mRNA"/>
</dbReference>
<dbReference type="RefSeq" id="NP_001017492.1">
    <property type="nucleotide sequence ID" value="NM_001017492.2"/>
</dbReference>
<dbReference type="RefSeq" id="NP_001416784.1">
    <property type="nucleotide sequence ID" value="NM_001429855.1"/>
</dbReference>
<dbReference type="RefSeq" id="XP_008767888.1">
    <property type="nucleotide sequence ID" value="XM_008769666.2"/>
</dbReference>
<dbReference type="RefSeq" id="XP_008767889.1">
    <property type="nucleotide sequence ID" value="XM_008769667.2"/>
</dbReference>
<dbReference type="SMR" id="Q6AXX9"/>
<dbReference type="FunCoup" id="Q6AXX9">
    <property type="interactions" value="2"/>
</dbReference>
<dbReference type="STRING" id="10116.ENSRNOP00000034180"/>
<dbReference type="PhosphoSitePlus" id="Q6AXX9"/>
<dbReference type="PaxDb" id="10116-ENSRNOP00000034180"/>
<dbReference type="Ensembl" id="ENSRNOT00000036906.5">
    <property type="protein sequence ID" value="ENSRNOP00000034180.3"/>
    <property type="gene ID" value="ENSRNOG00000028089.5"/>
</dbReference>
<dbReference type="Ensembl" id="ENSRNOT00000100845.1">
    <property type="protein sequence ID" value="ENSRNOP00000077092.1"/>
    <property type="gene ID" value="ENSRNOG00000028089.5"/>
</dbReference>
<dbReference type="GeneID" id="498251"/>
<dbReference type="KEGG" id="rno:498251"/>
<dbReference type="UCSC" id="RGD:1560256">
    <property type="organism name" value="rat"/>
</dbReference>
<dbReference type="AGR" id="RGD:1560256"/>
<dbReference type="CTD" id="403314"/>
<dbReference type="RGD" id="1560256">
    <property type="gene designation" value="Apobec4"/>
</dbReference>
<dbReference type="eggNOG" id="ENOG502QQXT">
    <property type="taxonomic scope" value="Eukaryota"/>
</dbReference>
<dbReference type="GeneTree" id="ENSGT00390000014243"/>
<dbReference type="HOGENOM" id="CLU_832944_0_0_1"/>
<dbReference type="InParanoid" id="Q6AXX9"/>
<dbReference type="OMA" id="TPCEEPP"/>
<dbReference type="PhylomeDB" id="Q6AXX9"/>
<dbReference type="TreeFam" id="TF338173"/>
<dbReference type="Reactome" id="R-RNO-72200">
    <property type="pathway name" value="mRNA Editing: C to U Conversion"/>
</dbReference>
<dbReference type="Reactome" id="R-RNO-75094">
    <property type="pathway name" value="Formation of the Editosome"/>
</dbReference>
<dbReference type="PRO" id="PR:Q6AXX9"/>
<dbReference type="Proteomes" id="UP000002494">
    <property type="component" value="Chromosome 13"/>
</dbReference>
<dbReference type="Bgee" id="ENSRNOG00000028089">
    <property type="expression patterns" value="Expressed in testis and 4 other cell types or tissues"/>
</dbReference>
<dbReference type="GO" id="GO:0016787">
    <property type="term" value="F:hydrolase activity"/>
    <property type="evidence" value="ECO:0007669"/>
    <property type="project" value="UniProtKB-KW"/>
</dbReference>
<dbReference type="GO" id="GO:0046872">
    <property type="term" value="F:metal ion binding"/>
    <property type="evidence" value="ECO:0007669"/>
    <property type="project" value="UniProtKB-KW"/>
</dbReference>
<dbReference type="GO" id="GO:0006397">
    <property type="term" value="P:mRNA processing"/>
    <property type="evidence" value="ECO:0007669"/>
    <property type="project" value="UniProtKB-KW"/>
</dbReference>
<dbReference type="Gene3D" id="3.40.140.10">
    <property type="entry name" value="Cytidine Deaminase, domain 2"/>
    <property type="match status" value="1"/>
</dbReference>
<dbReference type="InterPro" id="IPR038953">
    <property type="entry name" value="APOBEC4"/>
</dbReference>
<dbReference type="InterPro" id="IPR002125">
    <property type="entry name" value="CMP_dCMP_dom"/>
</dbReference>
<dbReference type="PANTHER" id="PTHR35672">
    <property type="entry name" value="C-U-EDITING ENZYME APOBEC-4-RELATED"/>
    <property type="match status" value="1"/>
</dbReference>
<dbReference type="PANTHER" id="PTHR35672:SF1">
    <property type="entry name" value="C-U-EDITING ENZYME APOBEC-4-RELATED"/>
    <property type="match status" value="1"/>
</dbReference>
<dbReference type="Pfam" id="PF18778">
    <property type="entry name" value="NAD1"/>
    <property type="match status" value="1"/>
</dbReference>
<dbReference type="PROSITE" id="PS51747">
    <property type="entry name" value="CYT_DCMP_DEAMINASES_2"/>
    <property type="match status" value="1"/>
</dbReference>
<reference key="1">
    <citation type="journal article" date="2004" name="Genome Res.">
        <title>The status, quality, and expansion of the NIH full-length cDNA project: the Mammalian Gene Collection (MGC).</title>
        <authorList>
            <consortium name="The MGC Project Team"/>
        </authorList>
    </citation>
    <scope>NUCLEOTIDE SEQUENCE [LARGE SCALE MRNA]</scope>
    <source>
        <tissue>Testis</tissue>
    </source>
</reference>
<organism>
    <name type="scientific">Rattus norvegicus</name>
    <name type="common">Rat</name>
    <dbReference type="NCBI Taxonomy" id="10116"/>
    <lineage>
        <taxon>Eukaryota</taxon>
        <taxon>Metazoa</taxon>
        <taxon>Chordata</taxon>
        <taxon>Craniata</taxon>
        <taxon>Vertebrata</taxon>
        <taxon>Euteleostomi</taxon>
        <taxon>Mammalia</taxon>
        <taxon>Eutheria</taxon>
        <taxon>Euarchontoglires</taxon>
        <taxon>Glires</taxon>
        <taxon>Rodentia</taxon>
        <taxon>Myomorpha</taxon>
        <taxon>Muroidea</taxon>
        <taxon>Muridae</taxon>
        <taxon>Murinae</taxon>
        <taxon>Rattus</taxon>
    </lineage>
</organism>
<protein>
    <recommendedName>
        <fullName>Putative C-&gt;U-editing enzyme APOBEC-4</fullName>
        <ecNumber>3.5.4.-</ecNumber>
    </recommendedName>
    <alternativeName>
        <fullName>Apolipoprotein B mRNA-editing enzyme catalytic polypeptide-like 4</fullName>
    </alternativeName>
</protein>
<evidence type="ECO:0000250" key="1"/>
<evidence type="ECO:0000255" key="2">
    <source>
        <dbReference type="PROSITE-ProRule" id="PRU01083"/>
    </source>
</evidence>
<evidence type="ECO:0000256" key="3">
    <source>
        <dbReference type="SAM" id="MobiDB-lite"/>
    </source>
</evidence>
<evidence type="ECO:0000305" key="4"/>
<feature type="chain" id="PRO_0000239358" description="Putative C-&gt;U-editing enzyme APOBEC-4">
    <location>
        <begin position="1"/>
        <end position="388"/>
    </location>
</feature>
<feature type="domain" description="CMP/dCMP-type deaminase" evidence="2">
    <location>
        <begin position="60"/>
        <end position="176"/>
    </location>
</feature>
<feature type="region of interest" description="Disordered" evidence="3">
    <location>
        <begin position="322"/>
        <end position="356"/>
    </location>
</feature>
<feature type="active site" description="Proton donor" evidence="1">
    <location>
        <position position="94"/>
    </location>
</feature>
<feature type="binding site" evidence="1">
    <location>
        <position position="92"/>
    </location>
    <ligand>
        <name>Zn(2+)</name>
        <dbReference type="ChEBI" id="CHEBI:29105"/>
        <note>catalytic</note>
    </ligand>
</feature>
<feature type="binding site" evidence="1">
    <location>
        <position position="126"/>
    </location>
    <ligand>
        <name>Zn(2+)</name>
        <dbReference type="ChEBI" id="CHEBI:29105"/>
        <note>catalytic</note>
    </ligand>
</feature>
<feature type="binding site" evidence="1">
    <location>
        <position position="133"/>
    </location>
    <ligand>
        <name>Zn(2+)</name>
        <dbReference type="ChEBI" id="CHEBI:29105"/>
        <note>catalytic</note>
    </ligand>
</feature>